<reference key="1">
    <citation type="journal article" date="2005" name="Arch. Microbiol.">
        <title>The genome sequence of an anaerobic aromatic-degrading denitrifying bacterium, strain EbN1.</title>
        <authorList>
            <person name="Rabus R."/>
            <person name="Kube M."/>
            <person name="Heider J."/>
            <person name="Beck A."/>
            <person name="Heitmann K."/>
            <person name="Widdel F."/>
            <person name="Reinhardt R."/>
        </authorList>
    </citation>
    <scope>NUCLEOTIDE SEQUENCE [LARGE SCALE GENOMIC DNA]</scope>
    <source>
        <strain>DSM 19018 / LMG 30748 / EbN1</strain>
    </source>
</reference>
<gene>
    <name evidence="1" type="primary">dapF</name>
    <name type="ordered locus">AZOSEA22370</name>
    <name type="ORF">ebA3950</name>
</gene>
<feature type="chain" id="PRO_1000011834" description="Diaminopimelate epimerase">
    <location>
        <begin position="1"/>
        <end position="277"/>
    </location>
</feature>
<feature type="active site" description="Proton donor" evidence="1">
    <location>
        <position position="75"/>
    </location>
</feature>
<feature type="active site" description="Proton acceptor" evidence="1">
    <location>
        <position position="219"/>
    </location>
</feature>
<feature type="binding site" evidence="1">
    <location>
        <position position="13"/>
    </location>
    <ligand>
        <name>substrate</name>
    </ligand>
</feature>
<feature type="binding site" evidence="1">
    <location>
        <position position="46"/>
    </location>
    <ligand>
        <name>substrate</name>
    </ligand>
</feature>
<feature type="binding site" evidence="1">
    <location>
        <position position="66"/>
    </location>
    <ligand>
        <name>substrate</name>
    </ligand>
</feature>
<feature type="binding site" evidence="1">
    <location>
        <begin position="76"/>
        <end position="77"/>
    </location>
    <ligand>
        <name>substrate</name>
    </ligand>
</feature>
<feature type="binding site" evidence="1">
    <location>
        <position position="159"/>
    </location>
    <ligand>
        <name>substrate</name>
    </ligand>
</feature>
<feature type="binding site" evidence="1">
    <location>
        <position position="192"/>
    </location>
    <ligand>
        <name>substrate</name>
    </ligand>
</feature>
<feature type="binding site" evidence="1">
    <location>
        <begin position="210"/>
        <end position="211"/>
    </location>
    <ligand>
        <name>substrate</name>
    </ligand>
</feature>
<feature type="binding site" evidence="1">
    <location>
        <begin position="220"/>
        <end position="221"/>
    </location>
    <ligand>
        <name>substrate</name>
    </ligand>
</feature>
<feature type="site" description="Could be important to modulate the pK values of the two catalytic cysteine residues" evidence="1">
    <location>
        <position position="161"/>
    </location>
</feature>
<feature type="site" description="Could be important to modulate the pK values of the two catalytic cysteine residues" evidence="1">
    <location>
        <position position="210"/>
    </location>
</feature>
<name>DAPF_AROAE</name>
<dbReference type="EC" id="5.1.1.7" evidence="1"/>
<dbReference type="EMBL" id="CR555306">
    <property type="protein sequence ID" value="CAI08362.1"/>
    <property type="molecule type" value="Genomic_DNA"/>
</dbReference>
<dbReference type="RefSeq" id="WP_011238050.1">
    <property type="nucleotide sequence ID" value="NC_006513.1"/>
</dbReference>
<dbReference type="SMR" id="Q5P2V2"/>
<dbReference type="STRING" id="76114.ebA3950"/>
<dbReference type="KEGG" id="eba:ebA3950"/>
<dbReference type="eggNOG" id="COG0253">
    <property type="taxonomic scope" value="Bacteria"/>
</dbReference>
<dbReference type="HOGENOM" id="CLU_053306_1_1_4"/>
<dbReference type="OrthoDB" id="9805408at2"/>
<dbReference type="UniPathway" id="UPA00034">
    <property type="reaction ID" value="UER00025"/>
</dbReference>
<dbReference type="Proteomes" id="UP000006552">
    <property type="component" value="Chromosome"/>
</dbReference>
<dbReference type="GO" id="GO:0005829">
    <property type="term" value="C:cytosol"/>
    <property type="evidence" value="ECO:0007669"/>
    <property type="project" value="TreeGrafter"/>
</dbReference>
<dbReference type="GO" id="GO:0008837">
    <property type="term" value="F:diaminopimelate epimerase activity"/>
    <property type="evidence" value="ECO:0007669"/>
    <property type="project" value="UniProtKB-UniRule"/>
</dbReference>
<dbReference type="GO" id="GO:0009089">
    <property type="term" value="P:lysine biosynthetic process via diaminopimelate"/>
    <property type="evidence" value="ECO:0007669"/>
    <property type="project" value="UniProtKB-UniRule"/>
</dbReference>
<dbReference type="FunFam" id="3.10.310.10:FF:000001">
    <property type="entry name" value="Diaminopimelate epimerase"/>
    <property type="match status" value="1"/>
</dbReference>
<dbReference type="Gene3D" id="3.10.310.10">
    <property type="entry name" value="Diaminopimelate Epimerase, Chain A, domain 1"/>
    <property type="match status" value="2"/>
</dbReference>
<dbReference type="HAMAP" id="MF_00197">
    <property type="entry name" value="DAP_epimerase"/>
    <property type="match status" value="1"/>
</dbReference>
<dbReference type="InterPro" id="IPR018510">
    <property type="entry name" value="DAP_epimerase_AS"/>
</dbReference>
<dbReference type="InterPro" id="IPR001653">
    <property type="entry name" value="DAP_epimerase_DapF"/>
</dbReference>
<dbReference type="NCBIfam" id="TIGR00652">
    <property type="entry name" value="DapF"/>
    <property type="match status" value="1"/>
</dbReference>
<dbReference type="PANTHER" id="PTHR31689:SF0">
    <property type="entry name" value="DIAMINOPIMELATE EPIMERASE"/>
    <property type="match status" value="1"/>
</dbReference>
<dbReference type="PANTHER" id="PTHR31689">
    <property type="entry name" value="DIAMINOPIMELATE EPIMERASE, CHLOROPLASTIC"/>
    <property type="match status" value="1"/>
</dbReference>
<dbReference type="Pfam" id="PF01678">
    <property type="entry name" value="DAP_epimerase"/>
    <property type="match status" value="2"/>
</dbReference>
<dbReference type="SUPFAM" id="SSF54506">
    <property type="entry name" value="Diaminopimelate epimerase-like"/>
    <property type="match status" value="1"/>
</dbReference>
<dbReference type="PROSITE" id="PS01326">
    <property type="entry name" value="DAP_EPIMERASE"/>
    <property type="match status" value="1"/>
</dbReference>
<comment type="function">
    <text evidence="1">Catalyzes the stereoinversion of LL-2,6-diaminopimelate (L,L-DAP) to meso-diaminopimelate (meso-DAP), a precursor of L-lysine and an essential component of the bacterial peptidoglycan.</text>
</comment>
<comment type="catalytic activity">
    <reaction evidence="1">
        <text>(2S,6S)-2,6-diaminopimelate = meso-2,6-diaminopimelate</text>
        <dbReference type="Rhea" id="RHEA:15393"/>
        <dbReference type="ChEBI" id="CHEBI:57609"/>
        <dbReference type="ChEBI" id="CHEBI:57791"/>
        <dbReference type="EC" id="5.1.1.7"/>
    </reaction>
</comment>
<comment type="pathway">
    <text evidence="1">Amino-acid biosynthesis; L-lysine biosynthesis via DAP pathway; DL-2,6-diaminopimelate from LL-2,6-diaminopimelate: step 1/1.</text>
</comment>
<comment type="subunit">
    <text evidence="1">Homodimer.</text>
</comment>
<comment type="subcellular location">
    <subcellularLocation>
        <location evidence="1">Cytoplasm</location>
    </subcellularLocation>
</comment>
<comment type="similarity">
    <text evidence="1">Belongs to the diaminopimelate epimerase family.</text>
</comment>
<accession>Q5P2V2</accession>
<proteinExistence type="inferred from homology"/>
<keyword id="KW-0028">Amino-acid biosynthesis</keyword>
<keyword id="KW-0963">Cytoplasm</keyword>
<keyword id="KW-0413">Isomerase</keyword>
<keyword id="KW-0457">Lysine biosynthesis</keyword>
<keyword id="KW-1185">Reference proteome</keyword>
<protein>
    <recommendedName>
        <fullName evidence="1">Diaminopimelate epimerase</fullName>
        <shortName evidence="1">DAP epimerase</shortName>
        <ecNumber evidence="1">5.1.1.7</ecNumber>
    </recommendedName>
    <alternativeName>
        <fullName evidence="1">PLP-independent amino acid racemase</fullName>
    </alternativeName>
</protein>
<sequence>MSLRFTKMHGLGNDFVVIDAIRQSVDLTPEQVRRLADRHFGIGCDQLLVVEEATRPDVDFRYRIFNADGGEVEQCGNGARCFVRFVHEQGLTAKRRIRVETRSGIIAPQLEDDGLVTVDMGVPVLEPARVPFVSDSDAIVQPLDVGGETVAITAVSMGNPHAVQVVADVDAAPVAAQGALIERHPRFPARVNAGFVQVVDAHRIRLRVFERGAGETLACGTGACAAVVTVILRELAQSPVRVETRGGELDIAWEGPGQPVLMTGPAVTVFAGEIDVD</sequence>
<organism>
    <name type="scientific">Aromatoleum aromaticum (strain DSM 19018 / LMG 30748 / EbN1)</name>
    <name type="common">Azoarcus sp. (strain EbN1)</name>
    <dbReference type="NCBI Taxonomy" id="76114"/>
    <lineage>
        <taxon>Bacteria</taxon>
        <taxon>Pseudomonadati</taxon>
        <taxon>Pseudomonadota</taxon>
        <taxon>Betaproteobacteria</taxon>
        <taxon>Rhodocyclales</taxon>
        <taxon>Rhodocyclaceae</taxon>
        <taxon>Aromatoleum</taxon>
    </lineage>
</organism>
<evidence type="ECO:0000255" key="1">
    <source>
        <dbReference type="HAMAP-Rule" id="MF_00197"/>
    </source>
</evidence>